<feature type="chain" id="PRO_0000364830" description="Ferredoxin--NADP reductase">
    <location>
        <begin position="1"/>
        <end position="338"/>
    </location>
</feature>
<feature type="binding site" evidence="1">
    <location>
        <position position="35"/>
    </location>
    <ligand>
        <name>FAD</name>
        <dbReference type="ChEBI" id="CHEBI:57692"/>
    </ligand>
</feature>
<feature type="binding site" evidence="1">
    <location>
        <position position="43"/>
    </location>
    <ligand>
        <name>FAD</name>
        <dbReference type="ChEBI" id="CHEBI:57692"/>
    </ligand>
</feature>
<feature type="binding site" evidence="1">
    <location>
        <position position="48"/>
    </location>
    <ligand>
        <name>FAD</name>
        <dbReference type="ChEBI" id="CHEBI:57692"/>
    </ligand>
</feature>
<feature type="binding site" evidence="1">
    <location>
        <position position="88"/>
    </location>
    <ligand>
        <name>FAD</name>
        <dbReference type="ChEBI" id="CHEBI:57692"/>
    </ligand>
</feature>
<feature type="binding site" evidence="1">
    <location>
        <position position="122"/>
    </location>
    <ligand>
        <name>FAD</name>
        <dbReference type="ChEBI" id="CHEBI:57692"/>
    </ligand>
</feature>
<feature type="binding site" evidence="1">
    <location>
        <position position="289"/>
    </location>
    <ligand>
        <name>FAD</name>
        <dbReference type="ChEBI" id="CHEBI:57692"/>
    </ligand>
</feature>
<feature type="binding site" evidence="1">
    <location>
        <position position="330"/>
    </location>
    <ligand>
        <name>FAD</name>
        <dbReference type="ChEBI" id="CHEBI:57692"/>
    </ligand>
</feature>
<name>FENR_EHRCR</name>
<reference key="1">
    <citation type="journal article" date="2006" name="PLoS Genet.">
        <title>Comparative genomics of emerging human ehrlichiosis agents.</title>
        <authorList>
            <person name="Dunning Hotopp J.C."/>
            <person name="Lin M."/>
            <person name="Madupu R."/>
            <person name="Crabtree J."/>
            <person name="Angiuoli S.V."/>
            <person name="Eisen J.A."/>
            <person name="Seshadri R."/>
            <person name="Ren Q."/>
            <person name="Wu M."/>
            <person name="Utterback T.R."/>
            <person name="Smith S."/>
            <person name="Lewis M."/>
            <person name="Khouri H."/>
            <person name="Zhang C."/>
            <person name="Niu H."/>
            <person name="Lin Q."/>
            <person name="Ohashi N."/>
            <person name="Zhi N."/>
            <person name="Nelson W.C."/>
            <person name="Brinkac L.M."/>
            <person name="Dodson R.J."/>
            <person name="Rosovitz M.J."/>
            <person name="Sundaram J.P."/>
            <person name="Daugherty S.C."/>
            <person name="Davidsen T."/>
            <person name="Durkin A.S."/>
            <person name="Gwinn M.L."/>
            <person name="Haft D.H."/>
            <person name="Selengut J.D."/>
            <person name="Sullivan S.A."/>
            <person name="Zafar N."/>
            <person name="Zhou L."/>
            <person name="Benahmed F."/>
            <person name="Forberger H."/>
            <person name="Halpin R."/>
            <person name="Mulligan S."/>
            <person name="Robinson J."/>
            <person name="White O."/>
            <person name="Rikihisa Y."/>
            <person name="Tettelin H."/>
        </authorList>
    </citation>
    <scope>NUCLEOTIDE SEQUENCE [LARGE SCALE GENOMIC DNA]</scope>
    <source>
        <strain>ATCC CRL-10679 / Arkansas</strain>
    </source>
</reference>
<sequence length="338" mass="37424">MTDYVTDIAVIGAGPVGIFTVFQAGMLKMRCCVIDALSEIGGQCLALYPEKPIYDIPGYPVINGKELIDSLKKQSEPFNPQYLLGQVAEKIEDYSDYFLIRTTTGIVVQSKVIIIAAGAGAFGPNRLPIDNILDYENKSVFYQVRKVSDFCDKNIMIAGGGDSAADWAVELSKVAKQLYVVHRRKNFRCAPNTALQMDNLSQSGKIKIIVPYQVKKLCGENGKLHSVIVKNITNHEEMALQVDYLFPFFGTSANLGPILNWGMEVKNYQILVNAETCLTNRNRIYAVGDIATYPGKLKLILTGFSEAAMACHHIYHVIYPNSPLNFQYSTSKGIPENC</sequence>
<gene>
    <name type="ordered locus">ECH_0649</name>
</gene>
<accession>Q2GGH5</accession>
<proteinExistence type="inferred from homology"/>
<comment type="catalytic activity">
    <reaction evidence="1">
        <text>2 reduced [2Fe-2S]-[ferredoxin] + NADP(+) + H(+) = 2 oxidized [2Fe-2S]-[ferredoxin] + NADPH</text>
        <dbReference type="Rhea" id="RHEA:20125"/>
        <dbReference type="Rhea" id="RHEA-COMP:10000"/>
        <dbReference type="Rhea" id="RHEA-COMP:10001"/>
        <dbReference type="ChEBI" id="CHEBI:15378"/>
        <dbReference type="ChEBI" id="CHEBI:33737"/>
        <dbReference type="ChEBI" id="CHEBI:33738"/>
        <dbReference type="ChEBI" id="CHEBI:57783"/>
        <dbReference type="ChEBI" id="CHEBI:58349"/>
        <dbReference type="EC" id="1.18.1.2"/>
    </reaction>
</comment>
<comment type="cofactor">
    <cofactor evidence="1">
        <name>FAD</name>
        <dbReference type="ChEBI" id="CHEBI:57692"/>
    </cofactor>
    <text evidence="1">Binds 1 FAD per subunit.</text>
</comment>
<comment type="subunit">
    <text evidence="1">Homodimer.</text>
</comment>
<comment type="similarity">
    <text evidence="1">Belongs to the ferredoxin--NADP reductase type 2 family.</text>
</comment>
<keyword id="KW-0274">FAD</keyword>
<keyword id="KW-0285">Flavoprotein</keyword>
<keyword id="KW-0521">NADP</keyword>
<keyword id="KW-0560">Oxidoreductase</keyword>
<keyword id="KW-1185">Reference proteome</keyword>
<protein>
    <recommendedName>
        <fullName evidence="1">Ferredoxin--NADP reductase</fullName>
        <shortName evidence="1">FNR</shortName>
        <shortName evidence="1">Fd-NADP(+) reductase</shortName>
        <ecNumber evidence="1">1.18.1.2</ecNumber>
    </recommendedName>
</protein>
<evidence type="ECO:0000255" key="1">
    <source>
        <dbReference type="HAMAP-Rule" id="MF_01685"/>
    </source>
</evidence>
<dbReference type="EC" id="1.18.1.2" evidence="1"/>
<dbReference type="EMBL" id="CP000236">
    <property type="protein sequence ID" value="ABD44655.1"/>
    <property type="molecule type" value="Genomic_DNA"/>
</dbReference>
<dbReference type="RefSeq" id="WP_006011494.1">
    <property type="nucleotide sequence ID" value="NC_007799.1"/>
</dbReference>
<dbReference type="SMR" id="Q2GGH5"/>
<dbReference type="STRING" id="205920.ECH_0649"/>
<dbReference type="KEGG" id="ech:ECH_0649"/>
<dbReference type="eggNOG" id="COG0492">
    <property type="taxonomic scope" value="Bacteria"/>
</dbReference>
<dbReference type="HOGENOM" id="CLU_031864_5_5_5"/>
<dbReference type="OrthoDB" id="9806179at2"/>
<dbReference type="Proteomes" id="UP000008320">
    <property type="component" value="Chromosome"/>
</dbReference>
<dbReference type="GO" id="GO:0004324">
    <property type="term" value="F:ferredoxin-NADP+ reductase activity"/>
    <property type="evidence" value="ECO:0007669"/>
    <property type="project" value="UniProtKB-UniRule"/>
</dbReference>
<dbReference type="GO" id="GO:0050660">
    <property type="term" value="F:flavin adenine dinucleotide binding"/>
    <property type="evidence" value="ECO:0007669"/>
    <property type="project" value="UniProtKB-UniRule"/>
</dbReference>
<dbReference type="GO" id="GO:0050661">
    <property type="term" value="F:NADP binding"/>
    <property type="evidence" value="ECO:0007669"/>
    <property type="project" value="UniProtKB-UniRule"/>
</dbReference>
<dbReference type="Gene3D" id="3.50.50.60">
    <property type="entry name" value="FAD/NAD(P)-binding domain"/>
    <property type="match status" value="2"/>
</dbReference>
<dbReference type="HAMAP" id="MF_01685">
    <property type="entry name" value="FENR2"/>
    <property type="match status" value="1"/>
</dbReference>
<dbReference type="InterPro" id="IPR036188">
    <property type="entry name" value="FAD/NAD-bd_sf"/>
</dbReference>
<dbReference type="InterPro" id="IPR023753">
    <property type="entry name" value="FAD/NAD-binding_dom"/>
</dbReference>
<dbReference type="InterPro" id="IPR022890">
    <property type="entry name" value="Fd--NADP_Rdtase_type_2"/>
</dbReference>
<dbReference type="InterPro" id="IPR050097">
    <property type="entry name" value="Ferredoxin-NADP_redctase_2"/>
</dbReference>
<dbReference type="PANTHER" id="PTHR48105">
    <property type="entry name" value="THIOREDOXIN REDUCTASE 1-RELATED-RELATED"/>
    <property type="match status" value="1"/>
</dbReference>
<dbReference type="Pfam" id="PF07992">
    <property type="entry name" value="Pyr_redox_2"/>
    <property type="match status" value="1"/>
</dbReference>
<dbReference type="PRINTS" id="PR00368">
    <property type="entry name" value="FADPNR"/>
</dbReference>
<dbReference type="PRINTS" id="PR00469">
    <property type="entry name" value="PNDRDTASEII"/>
</dbReference>
<dbReference type="SUPFAM" id="SSF51905">
    <property type="entry name" value="FAD/NAD(P)-binding domain"/>
    <property type="match status" value="1"/>
</dbReference>
<organism>
    <name type="scientific">Ehrlichia chaffeensis (strain ATCC CRL-10679 / Arkansas)</name>
    <dbReference type="NCBI Taxonomy" id="205920"/>
    <lineage>
        <taxon>Bacteria</taxon>
        <taxon>Pseudomonadati</taxon>
        <taxon>Pseudomonadota</taxon>
        <taxon>Alphaproteobacteria</taxon>
        <taxon>Rickettsiales</taxon>
        <taxon>Anaplasmataceae</taxon>
        <taxon>Ehrlichia</taxon>
    </lineage>
</organism>